<reference key="1">
    <citation type="journal article" date="1989" name="Nature">
        <title>Importance of a novel GABAA receptor subunit for benzodiazepine pharmacology.</title>
        <authorList>
            <person name="Pritchett D.B."/>
            <person name="Sontheimer H."/>
            <person name="Shivers B.D."/>
            <person name="Ymer S."/>
            <person name="Kettenmann H."/>
            <person name="Schofield P.R."/>
            <person name="Seeburg P.H."/>
        </authorList>
    </citation>
    <scope>NUCLEOTIDE SEQUENCE [MRNA] (ISOFORM 2)</scope>
    <scope>FUNCTION</scope>
    <scope>TRANSPORTER ACTIVITY</scope>
    <scope>SUBCELLULAR LOCATION</scope>
    <scope>SUBUNIT</scope>
    <scope>ACTIVITY REGULATION</scope>
    <source>
        <tissue>Brain</tissue>
    </source>
</reference>
<reference key="2">
    <citation type="journal article" date="2000" name="DNA Seq.">
        <title>Complete genomic sequence of 195 Kb of human DNA containing the gene GABRG2.</title>
        <authorList>
            <person name="Jiang S."/>
            <person name="Yu J."/>
            <person name="Wang J."/>
            <person name="Tan Z."/>
            <person name="Xue H."/>
            <person name="Feng G."/>
            <person name="He L."/>
            <person name="Yang H."/>
        </authorList>
    </citation>
    <scope>NUCLEOTIDE SEQUENCE [GENOMIC DNA]</scope>
</reference>
<reference key="3">
    <citation type="journal article" date="2004" name="Nature">
        <title>The DNA sequence and comparative analysis of human chromosome 5.</title>
        <authorList>
            <person name="Schmutz J."/>
            <person name="Martin J."/>
            <person name="Terry A."/>
            <person name="Couronne O."/>
            <person name="Grimwood J."/>
            <person name="Lowry S."/>
            <person name="Gordon L.A."/>
            <person name="Scott D."/>
            <person name="Xie G."/>
            <person name="Huang W."/>
            <person name="Hellsten U."/>
            <person name="Tran-Gyamfi M."/>
            <person name="She X."/>
            <person name="Prabhakar S."/>
            <person name="Aerts A."/>
            <person name="Altherr M."/>
            <person name="Bajorek E."/>
            <person name="Black S."/>
            <person name="Branscomb E."/>
            <person name="Caoile C."/>
            <person name="Challacombe J.F."/>
            <person name="Chan Y.M."/>
            <person name="Denys M."/>
            <person name="Detter J.C."/>
            <person name="Escobar J."/>
            <person name="Flowers D."/>
            <person name="Fotopulos D."/>
            <person name="Glavina T."/>
            <person name="Gomez M."/>
            <person name="Gonzales E."/>
            <person name="Goodstein D."/>
            <person name="Grigoriev I."/>
            <person name="Groza M."/>
            <person name="Hammon N."/>
            <person name="Hawkins T."/>
            <person name="Haydu L."/>
            <person name="Israni S."/>
            <person name="Jett J."/>
            <person name="Kadner K."/>
            <person name="Kimball H."/>
            <person name="Kobayashi A."/>
            <person name="Lopez F."/>
            <person name="Lou Y."/>
            <person name="Martinez D."/>
            <person name="Medina C."/>
            <person name="Morgan J."/>
            <person name="Nandkeshwar R."/>
            <person name="Noonan J.P."/>
            <person name="Pitluck S."/>
            <person name="Pollard M."/>
            <person name="Predki P."/>
            <person name="Priest J."/>
            <person name="Ramirez L."/>
            <person name="Retterer J."/>
            <person name="Rodriguez A."/>
            <person name="Rogers S."/>
            <person name="Salamov A."/>
            <person name="Salazar A."/>
            <person name="Thayer N."/>
            <person name="Tice H."/>
            <person name="Tsai M."/>
            <person name="Ustaszewska A."/>
            <person name="Vo N."/>
            <person name="Wheeler J."/>
            <person name="Wu K."/>
            <person name="Yang J."/>
            <person name="Dickson M."/>
            <person name="Cheng J.-F."/>
            <person name="Eichler E.E."/>
            <person name="Olsen A."/>
            <person name="Pennacchio L.A."/>
            <person name="Rokhsar D.S."/>
            <person name="Richardson P."/>
            <person name="Lucas S.M."/>
            <person name="Myers R.M."/>
            <person name="Rubin E.M."/>
        </authorList>
    </citation>
    <scope>NUCLEOTIDE SEQUENCE [LARGE SCALE GENOMIC DNA]</scope>
</reference>
<reference key="4">
    <citation type="journal article" date="2004" name="Genome Res.">
        <title>The status, quality, and expansion of the NIH full-length cDNA project: the Mammalian Gene Collection (MGC).</title>
        <authorList>
            <consortium name="The MGC Project Team"/>
        </authorList>
    </citation>
    <scope>NUCLEOTIDE SEQUENCE [LARGE SCALE MRNA] (ISOFORMS 1 AND 2)</scope>
    <scope>VARIANT ARG-357</scope>
    <source>
        <tissue>Brain</tissue>
    </source>
</reference>
<reference key="5">
    <citation type="journal article" date="1993" name="J. Neurochem.">
        <title>Antibodies to the human gamma 2 subunit of the gamma-aminobutyric acidA/benzodiazepine receptor.</title>
        <authorList>
            <person name="Khan Z.U."/>
            <person name="Fernando L.P."/>
            <person name="Escriba P."/>
            <person name="Busquets X."/>
            <person name="Mallet J."/>
            <person name="Miralles C.P."/>
            <person name="Filla M."/>
            <person name="De Blas A.L."/>
        </authorList>
    </citation>
    <scope>NUCLEOTIDE SEQUENCE [MRNA] OF 357-451 (ISOFORM 2)</scope>
    <source>
        <tissue>Brain cortex</tissue>
    </source>
</reference>
<reference key="6">
    <citation type="journal article" date="1999" name="Nature">
        <title>GABA(A)-receptor-associated protein links GABA(A) receptors and the cytoskeleton.</title>
        <authorList>
            <person name="Wang H."/>
            <person name="Bedford F.K."/>
            <person name="Brandon N.J."/>
            <person name="Moss S.J."/>
            <person name="Olsen R.W."/>
        </authorList>
    </citation>
    <scope>INTERACTION WITH GABARAP</scope>
</reference>
<reference key="7">
    <citation type="journal article" date="2004" name="Proc. Natl. Acad. Sci. U.S.A.">
        <title>Tonic inhibition in mouse hippocampal CA1 pyramidal neurons is mediated by alpha5 subunit-containing gamma-aminobutyric acid type A receptors.</title>
        <authorList>
            <person name="Caraiscos V.B."/>
            <person name="Elliott E.M."/>
            <person name="You-Ten K.E."/>
            <person name="Cheng V.Y."/>
            <person name="Belelli D."/>
            <person name="Newell J.G."/>
            <person name="Jackson M.F."/>
            <person name="Lambert J.J."/>
            <person name="Rosahl T.W."/>
            <person name="Wafford K.A."/>
            <person name="MacDonald J.F."/>
            <person name="Orser B.A."/>
        </authorList>
    </citation>
    <scope>FUNCTION</scope>
    <scope>TRANSPORTER ACTIVITY</scope>
    <scope>INTERACTION WITH GABRA5 AND GABRB3</scope>
</reference>
<reference key="8">
    <citation type="journal article" date="2006" name="BMC Pharmacol.">
        <title>Impact of epsilon and theta subunits on pharmacological properties of alpha3beta1 GABAA receptors expressed in Xenopus oocytes.</title>
        <authorList>
            <person name="Ranna M."/>
            <person name="Sinkkonen S.T."/>
            <person name="Moeykkynen T."/>
            <person name="Uusi-Oukari M."/>
            <person name="Korpi E.R."/>
        </authorList>
    </citation>
    <scope>FUNCTION</scope>
    <scope>TRANSPORTER ACTIVITY</scope>
    <scope>ACTIVITY REGULATION</scope>
    <scope>INTERACTION WITH GABRA3 AND GABRB1</scope>
</reference>
<reference key="9">
    <citation type="journal article" date="2013" name="Eur. J. Neurosci.">
        <title>GABA(A) receptors can initiate the formation of functional inhibitory GABAergic synapses.</title>
        <authorList>
            <person name="Fuchs C."/>
            <person name="Abitbol K."/>
            <person name="Burden J.J."/>
            <person name="Mercer A."/>
            <person name="Brown L."/>
            <person name="Iball J."/>
            <person name="Anne Stephenson F."/>
            <person name="Thomson A.M."/>
            <person name="Jovanovic J.N."/>
        </authorList>
    </citation>
    <scope>FUNCTION</scope>
</reference>
<reference key="10">
    <citation type="journal article" date="2014" name="J. Vis. Exp.">
        <title>Inhibitory synapse formation in a co-culture model incorporating GABAergic medium spiny neurons and HEK293 cells stably expressing GABAA receptors.</title>
        <authorList>
            <person name="Brown L.E."/>
            <person name="Fuchs C."/>
            <person name="Nicholson M.W."/>
            <person name="Stephenson F.A."/>
            <person name="Thomson A.M."/>
            <person name="Jovanovic J.N."/>
        </authorList>
    </citation>
    <scope>FUNCTION</scope>
</reference>
<reference evidence="27 28" key="11">
    <citation type="journal article" date="2018" name="Nature">
        <title>Structure of a human synaptic GABAA receptor.</title>
        <authorList>
            <person name="Zhu S."/>
            <person name="Noviello C.M."/>
            <person name="Teng J."/>
            <person name="Walsh R.M. Jr."/>
            <person name="Kim J.J."/>
            <person name="Hibbs R.E."/>
        </authorList>
    </citation>
    <scope>STRUCTURE BY ELECTRON MICROSCOPY (3.80 ANGSTROMS) OF 8-326 IN COMPLEX WITH GABA AND FLUMAZENIL</scope>
    <scope>FUNCTION</scope>
    <scope>TRANSPORTER ACTIVITY</scope>
    <scope>ACTIVITY REGULATION</scope>
    <scope>SUBUNIT</scope>
    <scope>INTERACTION WITH GABRA1 AND GABRB2</scope>
    <scope>DOMAIN</scope>
    <scope>GLYCOSYLATION AT ASN-247</scope>
</reference>
<reference evidence="29" key="12">
    <citation type="journal article" date="2019" name="Nature">
        <title>Cryo-EM structure of the human alpha1beta3gamma2 GABAA receptor in a lipid bilayer.</title>
        <authorList>
            <person name="Laverty D."/>
            <person name="Desai R."/>
            <person name="Uchanski T."/>
            <person name="Masiulis S."/>
            <person name="Stec W.J."/>
            <person name="Malinauskas T."/>
            <person name="Zivanov J."/>
            <person name="Pardon E."/>
            <person name="Steyaert J."/>
            <person name="Miller K.W."/>
            <person name="Aricescu A.R."/>
        </authorList>
    </citation>
    <scope>STRUCTURE BY ELECTRON MICROSCOPY (3.20 ANGSTROMS) OF 1-467</scope>
    <scope>FUNCTION</scope>
    <scope>TRANSPORTER ACTIVITY</scope>
    <scope>SUBUNIT</scope>
    <scope>INTERACTION WITH GABRA1 AND GABRB3</scope>
    <scope>DISULFIDE BOND</scope>
    <scope>GLYCOSYLATION AT ASN-247</scope>
</reference>
<reference key="13">
    <citation type="journal article" date="2017" name="Brain">
        <title>De novo GABRG2 mutations associated with epileptic encephalopathies.</title>
        <authorList>
            <person name="Shen D."/>
            <person name="Hernandez C.C."/>
            <person name="Shen W."/>
            <person name="Hu N."/>
            <person name="Poduri A."/>
            <person name="Shiedley B."/>
            <person name="Rotenberg A."/>
            <person name="Datta A.N."/>
            <person name="Leiz S."/>
            <person name="Patzer S."/>
            <person name="Boor R."/>
            <person name="Ramsey K."/>
            <person name="Goldberg E."/>
            <person name="Helbig I."/>
            <person name="Ortiz-Gonzalez X.R."/>
            <person name="Lemke J.R."/>
            <person name="Marsh E.D."/>
            <person name="Macdonald R.L."/>
        </authorList>
    </citation>
    <scope>VARIANTS DEE74 THR-106; THR-107; SER-282; GLN-323; TRP-323 AND LEU-343</scope>
    <scope>CHARACTERIZATION OF VARIANTS DEE74 THR-106; THR-107; SER-282; GLN-323; TRP-323 AND LEU-343</scope>
    <scope>SUBCELLULAR LOCATION</scope>
    <scope>FUNCTION</scope>
    <scope>TRANSPORTER ACTIVITY</scope>
    <scope>ACTIVITY REGULATION</scope>
</reference>
<reference key="14">
    <citation type="journal article" date="2001" name="Nat. Genet.">
        <title>First genetic evidence of GABA(A) receptor dysfunction in epilepsy: a mutation in the gamma2-subunit gene.</title>
        <authorList>
            <person name="Baulac S."/>
            <person name="Huberfeld G."/>
            <person name="Gourfinkel-An I."/>
            <person name="Mitropoulou G."/>
            <person name="Beranger A."/>
            <person name="Prud'homme J.-F."/>
            <person name="Baulac M."/>
            <person name="Brice A."/>
            <person name="Bruzzone R."/>
            <person name="LeGuern E."/>
        </authorList>
    </citation>
    <scope>VARIANT GEFSP3 MET-328</scope>
</reference>
<reference key="15">
    <citation type="journal article" date="2001" name="Nat. Genet.">
        <title>Mutant GABA(A) receptor gamma2-subunit in childhood absence epilepsy and febrile seizures.</title>
        <authorList>
            <person name="Wallace R.H."/>
            <person name="Marini C."/>
            <person name="Petrou S."/>
            <person name="Harkin L.A."/>
            <person name="Bowser D.N."/>
            <person name="Panchal R.G."/>
            <person name="Williams D.A."/>
            <person name="Sutherland G.R."/>
            <person name="Mulley J.C."/>
            <person name="Scheffer I.E."/>
            <person name="Berkovic S.F."/>
        </authorList>
    </citation>
    <scope>VARIANT ECA2/FEB8 GLN-82</scope>
</reference>
<reference key="16">
    <citation type="journal article" date="2006" name="Neurology">
        <title>A novel GABRG2 mutation associated with febrile seizures.</title>
        <authorList>
            <person name="Audenaert D."/>
            <person name="Schwartz E."/>
            <person name="Claeys K.G."/>
            <person name="Claes L."/>
            <person name="Deprez L."/>
            <person name="Suls A."/>
            <person name="Van Dyck T."/>
            <person name="Lagae L."/>
            <person name="Van Broeckhoven C."/>
            <person name="Macdonald R.L."/>
            <person name="De Jonghe P."/>
        </authorList>
    </citation>
    <scope>VARIANT FEB8 GLY-177</scope>
</reference>
<reference key="17">
    <citation type="journal article" date="2010" name="J. Hum. Genet.">
        <title>Mutational analysis of GABRG2 in a Japanese cohort with childhood epilepsies.</title>
        <authorList>
            <person name="Shi X."/>
            <person name="Huang M.C."/>
            <person name="Ishii A."/>
            <person name="Yoshida S."/>
            <person name="Okada M."/>
            <person name="Morita K."/>
            <person name="Nagafuji H."/>
            <person name="Yasumoto S."/>
            <person name="Kaneko S."/>
            <person name="Kojima T."/>
            <person name="Hirose S."/>
        </authorList>
    </citation>
    <scope>VARIANT SER-79</scope>
</reference>
<reference key="18">
    <citation type="journal article" date="2011" name="Eur. J. Neurosci.">
        <title>Novel alpha1 and gamma2 GABAA receptor subunit mutations in families with idiopathic generalized epilepsy.</title>
        <authorList>
            <person name="Lachance-Touchette P."/>
            <person name="Brown P."/>
            <person name="Meloche C."/>
            <person name="Kinirons P."/>
            <person name="Lapointe L."/>
            <person name="Lacasse H."/>
            <person name="Lortie A."/>
            <person name="Carmant L."/>
            <person name="Bedford F."/>
            <person name="Bowie D."/>
            <person name="Cossette P."/>
        </authorList>
    </citation>
    <scope>VARIANT SER-83</scope>
    <scope>CHARACTERIZATION OF VARIANT SER-83</scope>
</reference>
<reference key="19">
    <citation type="journal article" date="2013" name="Nat. Genet.">
        <title>Targeted resequencing in epileptic encephalopathies identifies de novo mutations in CHD2 and SYNGAP1.</title>
        <authorList>
            <person name="Carvill G.L."/>
            <person name="Heavin S.B."/>
            <person name="Yendle S.C."/>
            <person name="McMahon J.M."/>
            <person name="O'Roak B.J."/>
            <person name="Cook J."/>
            <person name="Khan A."/>
            <person name="Dorschner M.O."/>
            <person name="Weaver M."/>
            <person name="Calvert S."/>
            <person name="Malone S."/>
            <person name="Wallace G."/>
            <person name="Stanley T."/>
            <person name="Bye A.M."/>
            <person name="Bleasel A."/>
            <person name="Howell K.B."/>
            <person name="Kivity S."/>
            <person name="Mackay M.T."/>
            <person name="Rodriguez-Casero V."/>
            <person name="Webster R."/>
            <person name="Korczyn A."/>
            <person name="Afawi Z."/>
            <person name="Zelnick N."/>
            <person name="Lerman-Sagie T."/>
            <person name="Lev D."/>
            <person name="Moeller R.S."/>
            <person name="Gill D."/>
            <person name="Andrade D.M."/>
            <person name="Freeman J.L."/>
            <person name="Sadleir L.G."/>
            <person name="Shendure J."/>
            <person name="Berkovic S.F."/>
            <person name="Scheffer I.E."/>
            <person name="Mefford H.C."/>
        </authorList>
    </citation>
    <scope>VARIANT GEFSP3 GLN-323</scope>
</reference>
<reference key="20">
    <citation type="journal article" date="2017" name="Hum. Mutat.">
        <title>Diagnostic targeted resequencing in 349 patients with drug-resistant pediatric epilepsies identifies causative mutations in 30 different genes.</title>
        <authorList>
            <consortium name="Clinical Study Group"/>
            <person name="Parrini E."/>
            <person name="Marini C."/>
            <person name="Mei D."/>
            <person name="Galuppi A."/>
            <person name="Cellini E."/>
            <person name="Pucatti D."/>
            <person name="Chiti L."/>
            <person name="Rutigliano D."/>
            <person name="Bianchini C."/>
            <person name="Virdo S."/>
            <person name="De Vita D."/>
            <person name="Bigoni S."/>
            <person name="Barba C."/>
            <person name="Mari F."/>
            <person name="Montomoli M."/>
            <person name="Pisano T."/>
            <person name="Rosati A."/>
            <person name="Guerrini R."/>
        </authorList>
    </citation>
    <scope>VARIANT CYS-274</scope>
</reference>
<protein>
    <recommendedName>
        <fullName evidence="22">Gamma-aminobutyric acid receptor subunit gamma-2</fullName>
    </recommendedName>
    <alternativeName>
        <fullName evidence="24">GABA(A) receptor subunit gamma-2</fullName>
        <shortName evidence="23">GABAAR subunit gamma-2</shortName>
    </alternativeName>
</protein>
<keyword id="KW-0002">3D-structure</keyword>
<keyword id="KW-0025">Alternative splicing</keyword>
<keyword id="KW-1003">Cell membrane</keyword>
<keyword id="KW-0966">Cell projection</keyword>
<keyword id="KW-0868">Chloride</keyword>
<keyword id="KW-0869">Chloride channel</keyword>
<keyword id="KW-0968">Cytoplasmic vesicle</keyword>
<keyword id="KW-0225">Disease variant</keyword>
<keyword id="KW-1015">Disulfide bond</keyword>
<keyword id="KW-0887">Epilepsy</keyword>
<keyword id="KW-0325">Glycoprotein</keyword>
<keyword id="KW-0407">Ion channel</keyword>
<keyword id="KW-0406">Ion transport</keyword>
<keyword id="KW-0449">Lipoprotein</keyword>
<keyword id="KW-0472">Membrane</keyword>
<keyword id="KW-0564">Palmitate</keyword>
<keyword id="KW-0628">Postsynaptic cell membrane</keyword>
<keyword id="KW-1267">Proteomics identification</keyword>
<keyword id="KW-1185">Reference proteome</keyword>
<keyword id="KW-0732">Signal</keyword>
<keyword id="KW-0770">Synapse</keyword>
<keyword id="KW-0812">Transmembrane</keyword>
<keyword id="KW-1133">Transmembrane helix</keyword>
<keyword id="KW-0813">Transport</keyword>
<organism>
    <name type="scientific">Homo sapiens</name>
    <name type="common">Human</name>
    <dbReference type="NCBI Taxonomy" id="9606"/>
    <lineage>
        <taxon>Eukaryota</taxon>
        <taxon>Metazoa</taxon>
        <taxon>Chordata</taxon>
        <taxon>Craniata</taxon>
        <taxon>Vertebrata</taxon>
        <taxon>Euteleostomi</taxon>
        <taxon>Mammalia</taxon>
        <taxon>Eutheria</taxon>
        <taxon>Euarchontoglires</taxon>
        <taxon>Primates</taxon>
        <taxon>Haplorrhini</taxon>
        <taxon>Catarrhini</taxon>
        <taxon>Hominidae</taxon>
        <taxon>Homo</taxon>
    </lineage>
</organism>
<accession>P18507</accession>
<accession>F5HB82</accession>
<accession>Q6GRL6</accession>
<accession>Q6PCC3</accession>
<accession>Q9UDB3</accession>
<accession>Q9UN15</accession>
<proteinExistence type="evidence at protein level"/>
<gene>
    <name evidence="26" type="primary">GABRG2</name>
</gene>
<sequence length="475" mass="55186">MSSPNIWSTGSSVYSTPVFSQKMTVWILLLLSLYPGFTSQKSDDDYEDYASNKTWVLTPKVPEGDVTVILNNLLEGYDNKLRPDIGVKPTLIHTDMYVNSIGPVNAINMEYTIDIFFAQTWYDRRLKFNSTIKVLRLNSNMVGKIWIPDTFFRNSKKADAHWITTPNRMLRIWNDGRVLYTLRLTIDAECQLQLHNFPMDEHSCPLEFSSYGYPREEIVYQWKRSSVEVGDTRSWRLYQFSFVGLRNTTEVVKTTSGDYVVMSVYFDLSRRMGYFTIQTYIPCTLIVVLSWVSFWINKDAVPARTSLGITTVLTMTTLSTIARKSLPKVSYVTAMDLFVSVCFIFVFSALVEYGTLHYFVSNRKPSKDKDKKKKNPLLRMFSFKAPTIDIRPRSATIQMNNATHLQERDEEYGYECLDGKDCASFFCCFEDCRTGAWRHGRIHIRIAKMDSYARIFFPTAFCLFNLVYWVSYLYL</sequence>
<name>GBRG2_HUMAN</name>
<dbReference type="EMBL" id="X15376">
    <property type="protein sequence ID" value="CAA33437.1"/>
    <property type="molecule type" value="mRNA"/>
</dbReference>
<dbReference type="EMBL" id="AF165124">
    <property type="protein sequence ID" value="AAD50273.1"/>
    <property type="molecule type" value="Genomic_DNA"/>
</dbReference>
<dbReference type="EMBL" id="AC008611">
    <property type="status" value="NOT_ANNOTATED_CDS"/>
    <property type="molecule type" value="Genomic_DNA"/>
</dbReference>
<dbReference type="EMBL" id="AC091926">
    <property type="status" value="NOT_ANNOTATED_CDS"/>
    <property type="molecule type" value="Genomic_DNA"/>
</dbReference>
<dbReference type="EMBL" id="AC091984">
    <property type="status" value="NOT_ANNOTATED_CDS"/>
    <property type="molecule type" value="Genomic_DNA"/>
</dbReference>
<dbReference type="EMBL" id="BC059389">
    <property type="protein sequence ID" value="AAH59389.1"/>
    <property type="molecule type" value="mRNA"/>
</dbReference>
<dbReference type="EMBL" id="BC069348">
    <property type="protein sequence ID" value="AAH69348.1"/>
    <property type="molecule type" value="mRNA"/>
</dbReference>
<dbReference type="EMBL" id="BC074795">
    <property type="protein sequence ID" value="AAH74795.1"/>
    <property type="molecule type" value="mRNA"/>
</dbReference>
<dbReference type="CCDS" id="CCDS4358.1">
    <molecule id="P18507-1"/>
</dbReference>
<dbReference type="CCDS" id="CCDS4359.1">
    <molecule id="P18507-2"/>
</dbReference>
<dbReference type="CCDS" id="CCDS47333.1">
    <molecule id="P18507-3"/>
</dbReference>
<dbReference type="PIR" id="S03905">
    <property type="entry name" value="S03905"/>
</dbReference>
<dbReference type="RefSeq" id="NP_000807.2">
    <molecule id="P18507-1"/>
    <property type="nucleotide sequence ID" value="NM_000816.3"/>
</dbReference>
<dbReference type="RefSeq" id="NP_944493.2">
    <molecule id="P18507-3"/>
    <property type="nucleotide sequence ID" value="NM_198903.2"/>
</dbReference>
<dbReference type="RefSeq" id="NP_944494.1">
    <molecule id="P18507-2"/>
    <property type="nucleotide sequence ID" value="NM_198904.4"/>
</dbReference>
<dbReference type="PDB" id="6D6T">
    <property type="method" value="EM"/>
    <property type="resolution" value="3.80 A"/>
    <property type="chains" value="E=8-326"/>
</dbReference>
<dbReference type="PDB" id="6D6U">
    <property type="method" value="EM"/>
    <property type="resolution" value="3.80 A"/>
    <property type="chains" value="E=40-361, E=447-475"/>
</dbReference>
<dbReference type="PDB" id="6HUG">
    <property type="method" value="EM"/>
    <property type="resolution" value="3.10 A"/>
    <property type="chains" value="C=1-467"/>
</dbReference>
<dbReference type="PDB" id="6HUJ">
    <property type="method" value="EM"/>
    <property type="resolution" value="3.04 A"/>
    <property type="chains" value="C=66-363, C=445-475"/>
</dbReference>
<dbReference type="PDB" id="6HUK">
    <property type="method" value="EM"/>
    <property type="resolution" value="3.69 A"/>
    <property type="chains" value="C=1-467"/>
</dbReference>
<dbReference type="PDB" id="6HUO">
    <property type="method" value="EM"/>
    <property type="resolution" value="3.26 A"/>
    <property type="chains" value="C=1-467"/>
</dbReference>
<dbReference type="PDB" id="6HUP">
    <property type="method" value="EM"/>
    <property type="resolution" value="3.58 A"/>
    <property type="chains" value="C=1-467"/>
</dbReference>
<dbReference type="PDB" id="6I53">
    <property type="method" value="EM"/>
    <property type="resolution" value="3.20 A"/>
    <property type="chains" value="C=66-362, C=445-475"/>
</dbReference>
<dbReference type="PDB" id="6X3S">
    <property type="method" value="EM"/>
    <property type="resolution" value="3.12 A"/>
    <property type="chains" value="E=8-361, E=448-475"/>
</dbReference>
<dbReference type="PDB" id="6X3T">
    <property type="method" value="EM"/>
    <property type="resolution" value="2.55 A"/>
    <property type="chains" value="E=8-361, E=448-475"/>
</dbReference>
<dbReference type="PDB" id="6X3U">
    <property type="method" value="EM"/>
    <property type="resolution" value="3.49 A"/>
    <property type="chains" value="E=8-361, E=448-475"/>
</dbReference>
<dbReference type="PDB" id="6X3V">
    <property type="method" value="EM"/>
    <property type="resolution" value="3.50 A"/>
    <property type="chains" value="E=8-361, E=448-475"/>
</dbReference>
<dbReference type="PDB" id="6X3W">
    <property type="method" value="EM"/>
    <property type="resolution" value="3.30 A"/>
    <property type="chains" value="E=8-361, E=448-475"/>
</dbReference>
<dbReference type="PDB" id="6X3X">
    <property type="method" value="EM"/>
    <property type="resolution" value="2.92 A"/>
    <property type="chains" value="E=8-361, E=448-475"/>
</dbReference>
<dbReference type="PDB" id="6X3Z">
    <property type="method" value="EM"/>
    <property type="resolution" value="3.23 A"/>
    <property type="chains" value="E=8-361, E=448-475"/>
</dbReference>
<dbReference type="PDB" id="6X40">
    <property type="method" value="EM"/>
    <property type="resolution" value="2.86 A"/>
    <property type="chains" value="E=8-361, E=448-475"/>
</dbReference>
<dbReference type="PDB" id="7QNB">
    <property type="method" value="EM"/>
    <property type="resolution" value="3.10 A"/>
    <property type="chains" value="A/C=51-467"/>
</dbReference>
<dbReference type="PDB" id="7QNE">
    <property type="method" value="EM"/>
    <property type="resolution" value="2.70 A"/>
    <property type="chains" value="C=1-467"/>
</dbReference>
<dbReference type="PDB" id="7T0W">
    <property type="method" value="EM"/>
    <property type="resolution" value="3.00 A"/>
    <property type="chains" value="E=40-361, E=448-475"/>
</dbReference>
<dbReference type="PDB" id="7T0Z">
    <property type="method" value="EM"/>
    <property type="resolution" value="3.00 A"/>
    <property type="chains" value="E=40-361, E=448-475"/>
</dbReference>
<dbReference type="PDB" id="8DD2">
    <property type="method" value="EM"/>
    <property type="resolution" value="2.90 A"/>
    <property type="chains" value="E=40-361"/>
</dbReference>
<dbReference type="PDB" id="8DD3">
    <property type="method" value="EM"/>
    <property type="resolution" value="2.90 A"/>
    <property type="chains" value="E=40-361"/>
</dbReference>
<dbReference type="PDB" id="8SGO">
    <property type="method" value="EM"/>
    <property type="resolution" value="2.65 A"/>
    <property type="chains" value="E=40-361, E=439-467"/>
</dbReference>
<dbReference type="PDB" id="8SI9">
    <property type="method" value="EM"/>
    <property type="resolution" value="2.98 A"/>
    <property type="chains" value="E=40-361, E=439-467"/>
</dbReference>
<dbReference type="PDB" id="8SID">
    <property type="method" value="EM"/>
    <property type="resolution" value="2.71 A"/>
    <property type="chains" value="E=40-361, E=439-467"/>
</dbReference>
<dbReference type="PDB" id="8VQY">
    <property type="method" value="EM"/>
    <property type="resolution" value="2.82 A"/>
    <property type="chains" value="E=40-361, E=448-475"/>
</dbReference>
<dbReference type="PDB" id="8VRN">
    <property type="method" value="EM"/>
    <property type="resolution" value="2.57 A"/>
    <property type="chains" value="E=40-361, E=448-475"/>
</dbReference>
<dbReference type="PDB" id="9CRS">
    <property type="method" value="EM"/>
    <property type="resolution" value="2.90 A"/>
    <property type="chains" value="E=40-475"/>
</dbReference>
<dbReference type="PDB" id="9CRV">
    <property type="method" value="EM"/>
    <property type="resolution" value="3.18 A"/>
    <property type="chains" value="C=40-475"/>
</dbReference>
<dbReference type="PDB" id="9CSB">
    <property type="method" value="EM"/>
    <property type="resolution" value="3.34 A"/>
    <property type="chains" value="E=40-475"/>
</dbReference>
<dbReference type="PDB" id="9CT0">
    <property type="method" value="EM"/>
    <property type="resolution" value="3.19 A"/>
    <property type="chains" value="E=40-475"/>
</dbReference>
<dbReference type="PDB" id="9CTJ">
    <property type="method" value="EM"/>
    <property type="resolution" value="3.74 A"/>
    <property type="chains" value="E=40-475"/>
</dbReference>
<dbReference type="PDB" id="9CTP">
    <property type="method" value="EM"/>
    <property type="resolution" value="3.62 A"/>
    <property type="chains" value="E=40-475"/>
</dbReference>
<dbReference type="PDB" id="9CTV">
    <property type="method" value="EM"/>
    <property type="resolution" value="3.36 A"/>
    <property type="chains" value="C=40-475"/>
</dbReference>
<dbReference type="PDB" id="9CX7">
    <property type="method" value="EM"/>
    <property type="resolution" value="3.30 A"/>
    <property type="chains" value="C=40-475"/>
</dbReference>
<dbReference type="PDB" id="9CXA">
    <property type="method" value="EM"/>
    <property type="resolution" value="3.04 A"/>
    <property type="chains" value="E=1-475"/>
</dbReference>
<dbReference type="PDB" id="9CXB">
    <property type="method" value="EM"/>
    <property type="resolution" value="3.33 A"/>
    <property type="chains" value="E=40-475"/>
</dbReference>
<dbReference type="PDB" id="9CXC">
    <property type="method" value="EM"/>
    <property type="resolution" value="3.30 A"/>
    <property type="chains" value="C=40-475"/>
</dbReference>
<dbReference type="PDB" id="9CXD">
    <property type="method" value="EM"/>
    <property type="resolution" value="3.36 A"/>
    <property type="chains" value="E=40-475"/>
</dbReference>
<dbReference type="PDB" id="9DRX">
    <property type="method" value="EM"/>
    <property type="resolution" value="2.95 A"/>
    <property type="chains" value="E=40-361, E=448-475"/>
</dbReference>
<dbReference type="PDB" id="9EQG">
    <property type="method" value="EM"/>
    <property type="resolution" value="2.40 A"/>
    <property type="chains" value="C=1-475"/>
</dbReference>
<dbReference type="PDBsum" id="6D6T"/>
<dbReference type="PDBsum" id="6D6U"/>
<dbReference type="PDBsum" id="6HUG"/>
<dbReference type="PDBsum" id="6HUJ"/>
<dbReference type="PDBsum" id="6HUK"/>
<dbReference type="PDBsum" id="6HUO"/>
<dbReference type="PDBsum" id="6HUP"/>
<dbReference type="PDBsum" id="6I53"/>
<dbReference type="PDBsum" id="6X3S"/>
<dbReference type="PDBsum" id="6X3T"/>
<dbReference type="PDBsum" id="6X3U"/>
<dbReference type="PDBsum" id="6X3V"/>
<dbReference type="PDBsum" id="6X3W"/>
<dbReference type="PDBsum" id="6X3X"/>
<dbReference type="PDBsum" id="6X3Z"/>
<dbReference type="PDBsum" id="6X40"/>
<dbReference type="PDBsum" id="7QNB"/>
<dbReference type="PDBsum" id="7QNE"/>
<dbReference type="PDBsum" id="7T0W"/>
<dbReference type="PDBsum" id="7T0Z"/>
<dbReference type="PDBsum" id="8DD2"/>
<dbReference type="PDBsum" id="8DD3"/>
<dbReference type="PDBsum" id="8SGO"/>
<dbReference type="PDBsum" id="8SI9"/>
<dbReference type="PDBsum" id="8SID"/>
<dbReference type="PDBsum" id="8VQY"/>
<dbReference type="PDBsum" id="8VRN"/>
<dbReference type="PDBsum" id="9CRS"/>
<dbReference type="PDBsum" id="9CRV"/>
<dbReference type="PDBsum" id="9CSB"/>
<dbReference type="PDBsum" id="9CT0"/>
<dbReference type="PDBsum" id="9CTJ"/>
<dbReference type="PDBsum" id="9CTP"/>
<dbReference type="PDBsum" id="9CTV"/>
<dbReference type="PDBsum" id="9CX7"/>
<dbReference type="PDBsum" id="9CXA"/>
<dbReference type="PDBsum" id="9CXB"/>
<dbReference type="PDBsum" id="9CXC"/>
<dbReference type="PDBsum" id="9CXD"/>
<dbReference type="PDBsum" id="9DRX"/>
<dbReference type="PDBsum" id="9EQG"/>
<dbReference type="EMDB" id="EMD-0275"/>
<dbReference type="EMDB" id="EMD-0279"/>
<dbReference type="EMDB" id="EMD-0280"/>
<dbReference type="EMDB" id="EMD-0282"/>
<dbReference type="EMDB" id="EMD-0283"/>
<dbReference type="EMDB" id="EMD-19907"/>
<dbReference type="EMDB" id="EMD-22031"/>
<dbReference type="EMDB" id="EMD-22032"/>
<dbReference type="EMDB" id="EMD-22033"/>
<dbReference type="EMDB" id="EMD-22034"/>
<dbReference type="EMDB" id="EMD-22035"/>
<dbReference type="EMDB" id="EMD-22036"/>
<dbReference type="EMDB" id="EMD-22037"/>
<dbReference type="EMDB" id="EMD-22038"/>
<dbReference type="EMDB" id="EMD-25583"/>
<dbReference type="EMDB" id="EMD-25585"/>
<dbReference type="EMDB" id="EMD-27332"/>
<dbReference type="EMDB" id="EMD-27333"/>
<dbReference type="EMDB" id="EMD-40462"/>
<dbReference type="EMDB" id="EMD-40503"/>
<dbReference type="EMDB" id="EMD-40506"/>
<dbReference type="EMDB" id="EMD-43475"/>
<dbReference type="EMDB" id="EMD-43485"/>
<dbReference type="EMDB" id="EMD-4411"/>
<dbReference type="EMDB" id="EMD-45878"/>
<dbReference type="EMDB" id="EMD-45884"/>
<dbReference type="EMDB" id="EMD-45890"/>
<dbReference type="EMDB" id="EMD-45894"/>
<dbReference type="EMDB" id="EMD-45908"/>
<dbReference type="EMDB" id="EMD-45914"/>
<dbReference type="EMDB" id="EMD-45920"/>
<dbReference type="EMDB" id="EMD-45980"/>
<dbReference type="EMDB" id="EMD-45983"/>
<dbReference type="EMDB" id="EMD-45984"/>
<dbReference type="EMDB" id="EMD-45985"/>
<dbReference type="EMDB" id="EMD-45986"/>
<dbReference type="EMDB" id="EMD-47132"/>
<dbReference type="EMDB" id="EMD-7816"/>
<dbReference type="EMDB" id="EMD-7817"/>
<dbReference type="SMR" id="P18507"/>
<dbReference type="BioGRID" id="108840">
    <property type="interactions" value="22"/>
</dbReference>
<dbReference type="ComplexPortal" id="CPX-2159">
    <property type="entry name" value="GABA-A receptor, alpha1-beta2-gamma2"/>
</dbReference>
<dbReference type="ComplexPortal" id="CPX-2164">
    <property type="entry name" value="GABA-A receptor, alpha6-beta3-gamma2"/>
</dbReference>
<dbReference type="ComplexPortal" id="CPX-2166">
    <property type="entry name" value="GABA-A receptor, alpha3-beta3-gamma2"/>
</dbReference>
<dbReference type="ComplexPortal" id="CPX-2167">
    <property type="entry name" value="GABA-A receptor, alpha1-beta3-gamma2"/>
</dbReference>
<dbReference type="ComplexPortal" id="CPX-2168">
    <property type="entry name" value="GABA-A receptor, alpha5-beta3-gamma2"/>
</dbReference>
<dbReference type="ComplexPortal" id="CPX-2174">
    <property type="entry name" value="GABA-A receptor, alpha2-beta3-gamma2"/>
</dbReference>
<dbReference type="ComplexPortal" id="CPX-8571">
    <property type="entry name" value="GABA-A receptor, alpha4-beta3-gamma2"/>
</dbReference>
<dbReference type="ComplexPortal" id="CPX-8574">
    <property type="entry name" value="GABA-A receptor, alpha4-beta2-gamma2"/>
</dbReference>
<dbReference type="ComplexPortal" id="CPX-8576">
    <property type="entry name" value="GABA-A receptor, alpha5-beta2-gamma2"/>
</dbReference>
<dbReference type="ComplexPortal" id="CPX-8577">
    <property type="entry name" value="GABA-A receptor, alpha2-beta2-gamma2"/>
</dbReference>
<dbReference type="ComplexPortal" id="CPX-8580">
    <property type="entry name" value="GABA-A receptor, alpha3-beta2-gamma2"/>
</dbReference>
<dbReference type="ComplexPortal" id="CPX-8581">
    <property type="entry name" value="GABA-A receptor alpha6-beta2-gamma2"/>
</dbReference>
<dbReference type="ComplexPortal" id="CPX-8636">
    <property type="entry name" value="GABA-A receptor, alpha1-beta1-gamma2"/>
</dbReference>
<dbReference type="ComplexPortal" id="CPX-8702">
    <property type="entry name" value="GABA-A receptor, alpha2-beta1-gamma2 complex"/>
</dbReference>
<dbReference type="ComplexPortal" id="CPX-8721">
    <property type="entry name" value="GABA-A receptor, alpha3-beta1-gamma2 complex"/>
</dbReference>
<dbReference type="ComplexPortal" id="CPX-8723">
    <property type="entry name" value="GABA-A receptor, alpha4-beta1-gamma2 complex"/>
</dbReference>
<dbReference type="ComplexPortal" id="CPX-8724">
    <property type="entry name" value="GABA-A receptor, alpha5-beta1-gamma2 complex"/>
</dbReference>
<dbReference type="ComplexPortal" id="CPX-8727">
    <property type="entry name" value="GABA-A receptor alpha6-beta1-gamma2 complex"/>
</dbReference>
<dbReference type="ComplexPortal" id="CPX-8731">
    <property type="entry name" value="GABA-A receptor, beta3-gamma2 complex"/>
</dbReference>
<dbReference type="CORUM" id="P18507"/>
<dbReference type="FunCoup" id="P18507">
    <property type="interactions" value="584"/>
</dbReference>
<dbReference type="IntAct" id="P18507">
    <property type="interactions" value="20"/>
</dbReference>
<dbReference type="MINT" id="P18507"/>
<dbReference type="STRING" id="9606.ENSP00000410732"/>
<dbReference type="BindingDB" id="P18507"/>
<dbReference type="ChEMBL" id="CHEMBL2094120"/>
<dbReference type="ChEMBL" id="CHEMBL2094121"/>
<dbReference type="ChEMBL" id="CHEMBL2094122"/>
<dbReference type="ChEMBL" id="CHEMBL2094130"/>
<dbReference type="ChEMBL" id="CHEMBL2095172"/>
<dbReference type="ChEMBL" id="CHEMBL2095190"/>
<dbReference type="ChEMBL" id="CHEMBL2111339"/>
<dbReference type="ChEMBL" id="CHEMBL2111366"/>
<dbReference type="ChEMBL" id="CHEMBL2111370"/>
<dbReference type="ChEMBL" id="CHEMBL2111392"/>
<dbReference type="ChEMBL" id="CHEMBL2111413"/>
<dbReference type="ChEMBL" id="CHEMBL4523638"/>
<dbReference type="ChEMBL" id="CHEMBL4523640"/>
<dbReference type="ChEMBL" id="CHEMBL4523641"/>
<dbReference type="ChEMBL" id="CHEMBL5291949"/>
<dbReference type="ChEMBL" id="CHEMBL5303741"/>
<dbReference type="DrugBank" id="DB12537">
    <property type="generic name" value="1,2-Benzodiazepine"/>
</dbReference>
<dbReference type="DrugBank" id="DB00546">
    <property type="generic name" value="Adinazolam"/>
</dbReference>
<dbReference type="DrugBank" id="DB06579">
    <property type="generic name" value="Adipiplon"/>
</dbReference>
<dbReference type="DrugBank" id="DB00404">
    <property type="generic name" value="Alprazolam"/>
</dbReference>
<dbReference type="DrugBank" id="DB00543">
    <property type="generic name" value="Amoxapine"/>
</dbReference>
<dbReference type="DrugBank" id="DB11901">
    <property type="generic name" value="Apalutamide"/>
</dbReference>
<dbReference type="DrugBank" id="DB14719">
    <property type="generic name" value="Bentazepam"/>
</dbReference>
<dbReference type="DrugBank" id="DB11859">
    <property type="generic name" value="Brexanolone"/>
</dbReference>
<dbReference type="DrugBank" id="DB01558">
    <property type="generic name" value="Bromazepam"/>
</dbReference>
<dbReference type="DrugBank" id="DB09017">
    <property type="generic name" value="Brotizolam"/>
</dbReference>
<dbReference type="DrugBank" id="DB00237">
    <property type="generic name" value="Butabarbital"/>
</dbReference>
<dbReference type="DrugBank" id="DB00241">
    <property type="generic name" value="Butalbital"/>
</dbReference>
<dbReference type="DrugBank" id="DB01489">
    <property type="generic name" value="Camazepam"/>
</dbReference>
<dbReference type="DrugBank" id="DB00395">
    <property type="generic name" value="Carisoprodol"/>
</dbReference>
<dbReference type="DrugBank" id="DB00475">
    <property type="generic name" value="Chlordiazepoxide"/>
</dbReference>
<dbReference type="DrugBank" id="DB14715">
    <property type="generic name" value="Cinazepam"/>
</dbReference>
<dbReference type="DrugBank" id="DB01594">
    <property type="generic name" value="Cinolazepam"/>
</dbReference>
<dbReference type="DrugBank" id="DB00349">
    <property type="generic name" value="Clobazam"/>
</dbReference>
<dbReference type="DrugBank" id="DB01068">
    <property type="generic name" value="Clonazepam"/>
</dbReference>
<dbReference type="DrugBank" id="DB00628">
    <property type="generic name" value="Clorazepic acid"/>
</dbReference>
<dbReference type="DrugBank" id="DB01559">
    <property type="generic name" value="Clotiazepam"/>
</dbReference>
<dbReference type="DrugBank" id="DB01553">
    <property type="generic name" value="Cloxazolam"/>
</dbReference>
<dbReference type="DrugBank" id="DB01511">
    <property type="generic name" value="Delorazepam"/>
</dbReference>
<dbReference type="DrugBank" id="DB01189">
    <property type="generic name" value="Desflurane"/>
</dbReference>
<dbReference type="DrugBank" id="DB00829">
    <property type="generic name" value="Diazepam"/>
</dbReference>
<dbReference type="DrugBank" id="DB13837">
    <property type="generic name" value="Doxefazepam"/>
</dbReference>
<dbReference type="DrugBank" id="DB12308">
    <property type="generic name" value="Eltanolone"/>
</dbReference>
<dbReference type="DrugBank" id="DB00228">
    <property type="generic name" value="Enflurane"/>
</dbReference>
<dbReference type="DrugBank" id="DB01215">
    <property type="generic name" value="Estazolam"/>
</dbReference>
<dbReference type="DrugBank" id="DB00402">
    <property type="generic name" value="Eszopiclone"/>
</dbReference>
<dbReference type="DrugBank" id="DB00189">
    <property type="generic name" value="Ethchlorvynol"/>
</dbReference>
<dbReference type="DrugBank" id="DB01545">
    <property type="generic name" value="Ethyl loflazepate"/>
</dbReference>
<dbReference type="DrugBank" id="DB09166">
    <property type="generic name" value="Etizolam"/>
</dbReference>
<dbReference type="DrugBank" id="DB00292">
    <property type="generic name" value="Etomidate"/>
</dbReference>
<dbReference type="DrugBank" id="DB01567">
    <property type="generic name" value="Fludiazepam"/>
</dbReference>
<dbReference type="DrugBank" id="DB01205">
    <property type="generic name" value="Flumazenil"/>
</dbReference>
<dbReference type="DrugBank" id="DB01544">
    <property type="generic name" value="Flunitrazepam"/>
</dbReference>
<dbReference type="DrugBank" id="DB00690">
    <property type="generic name" value="Flurazepam"/>
</dbReference>
<dbReference type="DrugBank" id="DB02530">
    <property type="generic name" value="gamma-Aminobutyric acid"/>
</dbReference>
<dbReference type="DrugBank" id="DB05087">
    <property type="generic name" value="Ganaxolone"/>
</dbReference>
<dbReference type="DrugBank" id="DB01381">
    <property type="generic name" value="Ginkgo biloba"/>
</dbReference>
<dbReference type="DrugBank" id="DB01437">
    <property type="generic name" value="Glutethimide"/>
</dbReference>
<dbReference type="DrugBank" id="DB00801">
    <property type="generic name" value="Halazepam"/>
</dbReference>
<dbReference type="DrugBank" id="DB01159">
    <property type="generic name" value="Halothane"/>
</dbReference>
<dbReference type="DrugBank" id="DB00753">
    <property type="generic name" value="Isoflurane"/>
</dbReference>
<dbReference type="DrugBank" id="DB01587">
    <property type="generic name" value="Ketazolam"/>
</dbReference>
<dbReference type="DrugBank" id="DB00555">
    <property type="generic name" value="Lamotrigine"/>
</dbReference>
<dbReference type="DrugBank" id="DB13643">
    <property type="generic name" value="Loprazolam"/>
</dbReference>
<dbReference type="DrugBank" id="DB00186">
    <property type="generic name" value="Lorazepam"/>
</dbReference>
<dbReference type="DrugBank" id="DB13872">
    <property type="generic name" value="Lormetazepam"/>
</dbReference>
<dbReference type="DrugBank" id="DB13437">
    <property type="generic name" value="Medazepam"/>
</dbReference>
<dbReference type="DrugBank" id="DB00603">
    <property type="generic name" value="Medroxyprogesterone acetate"/>
</dbReference>
<dbReference type="DrugBank" id="DB01043">
    <property type="generic name" value="Memantine"/>
</dbReference>
<dbReference type="DrugBank" id="DB00371">
    <property type="generic name" value="Meprobamate"/>
</dbReference>
<dbReference type="DrugBank" id="DB00463">
    <property type="generic name" value="Metharbital"/>
</dbReference>
<dbReference type="DrugBank" id="DB01028">
    <property type="generic name" value="Methoxyflurane"/>
</dbReference>
<dbReference type="DrugBank" id="DB01107">
    <property type="generic name" value="Methyprylon"/>
</dbReference>
<dbReference type="DrugBank" id="DB15489">
    <property type="generic name" value="Mexazolam"/>
</dbReference>
<dbReference type="DrugBank" id="DB00683">
    <property type="generic name" value="Midazolam"/>
</dbReference>
<dbReference type="DrugBank" id="DB12458">
    <property type="generic name" value="Muscimol"/>
</dbReference>
<dbReference type="DrugBank" id="DB01595">
    <property type="generic name" value="Nitrazepam"/>
</dbReference>
<dbReference type="DrugBank" id="DB14028">
    <property type="generic name" value="Nordazepam"/>
</dbReference>
<dbReference type="DrugBank" id="DB00334">
    <property type="generic name" value="Olanzapine"/>
</dbReference>
<dbReference type="DrugBank" id="DB00842">
    <property type="generic name" value="Oxazepam"/>
</dbReference>
<dbReference type="DrugBank" id="DB14672">
    <property type="generic name" value="Oxazepam acetate"/>
</dbReference>
<dbReference type="DrugBank" id="DB00312">
    <property type="generic name" value="Pentobarbital"/>
</dbReference>
<dbReference type="DrugBank" id="DB00252">
    <property type="generic name" value="Phenytoin"/>
</dbReference>
<dbReference type="DrugBank" id="DB13335">
    <property type="generic name" value="Pinazepam"/>
</dbReference>
<dbReference type="DrugBank" id="DB01708">
    <property type="generic name" value="Prasterone"/>
</dbReference>
<dbReference type="DrugBank" id="DB01588">
    <property type="generic name" value="Prazepam"/>
</dbReference>
<dbReference type="DrugBank" id="DB00794">
    <property type="generic name" value="Primidone"/>
</dbReference>
<dbReference type="DrugBank" id="DB00818">
    <property type="generic name" value="Propofol"/>
</dbReference>
<dbReference type="DrugBank" id="DB01589">
    <property type="generic name" value="Quazepam"/>
</dbReference>
<dbReference type="DrugBank" id="DB12404">
    <property type="generic name" value="Remimazolam"/>
</dbReference>
<dbReference type="DrugBank" id="DB01236">
    <property type="generic name" value="Sevoflurane"/>
</dbReference>
<dbReference type="DrugBank" id="DB09118">
    <property type="generic name" value="Stiripentol"/>
</dbReference>
<dbReference type="DrugBank" id="DB00306">
    <property type="generic name" value="Talbutal"/>
</dbReference>
<dbReference type="DrugBank" id="DB01956">
    <property type="generic name" value="Taurine"/>
</dbReference>
<dbReference type="DrugBank" id="DB00231">
    <property type="generic name" value="Temazepam"/>
</dbReference>
<dbReference type="DrugBank" id="DB11582">
    <property type="generic name" value="Thiocolchicoside"/>
</dbReference>
<dbReference type="DrugBank" id="DB00897">
    <property type="generic name" value="Triazolam"/>
</dbReference>
<dbReference type="DrugBank" id="DB17063">
    <property type="generic name" value="ZK-93423"/>
</dbReference>
<dbReference type="DrugBank" id="DB00425">
    <property type="generic name" value="Zolpidem"/>
</dbReference>
<dbReference type="DrugBank" id="DB00909">
    <property type="generic name" value="Zonisamide"/>
</dbReference>
<dbReference type="DrugBank" id="DB15490">
    <property type="generic name" value="Zuranolone"/>
</dbReference>
<dbReference type="DrugCentral" id="P18507"/>
<dbReference type="TCDB" id="1.A.9.5.4">
    <property type="family name" value="the neurotransmitter receptor, cys loop, ligand-gated ion channel (lic) family"/>
</dbReference>
<dbReference type="GlyCosmos" id="P18507">
    <property type="glycosylation" value="3 sites, No reported glycans"/>
</dbReference>
<dbReference type="GlyGen" id="P18507">
    <property type="glycosylation" value="3 sites"/>
</dbReference>
<dbReference type="iPTMnet" id="P18507"/>
<dbReference type="PhosphoSitePlus" id="P18507"/>
<dbReference type="SwissPalm" id="P18507"/>
<dbReference type="BioMuta" id="GABRG2"/>
<dbReference type="DMDM" id="116242488"/>
<dbReference type="jPOST" id="P18507"/>
<dbReference type="MassIVE" id="P18507"/>
<dbReference type="PaxDb" id="9606-ENSP00000410732"/>
<dbReference type="PeptideAtlas" id="P18507"/>
<dbReference type="ProteomicsDB" id="27833"/>
<dbReference type="ProteomicsDB" id="53569">
    <molecule id="P18507-1"/>
</dbReference>
<dbReference type="ProteomicsDB" id="53570">
    <molecule id="P18507-2"/>
</dbReference>
<dbReference type="TopDownProteomics" id="P18507-2">
    <molecule id="P18507-2"/>
</dbReference>
<dbReference type="ABCD" id="P18507">
    <property type="antibodies" value="4 sequenced antibodies"/>
</dbReference>
<dbReference type="Antibodypedia" id="28585">
    <property type="antibodies" value="395 antibodies from 38 providers"/>
</dbReference>
<dbReference type="DNASU" id="2566"/>
<dbReference type="Ensembl" id="ENST00000414552.6">
    <molecule id="P18507-3"/>
    <property type="protein sequence ID" value="ENSP00000410732.2"/>
    <property type="gene ID" value="ENSG00000113327.17"/>
</dbReference>
<dbReference type="Ensembl" id="ENST00000639111.2">
    <molecule id="P18507-1"/>
    <property type="protein sequence ID" value="ENSP00000492125.2"/>
    <property type="gene ID" value="ENSG00000113327.17"/>
</dbReference>
<dbReference type="Ensembl" id="ENST00000639213.2">
    <molecule id="P18507-2"/>
    <property type="protein sequence ID" value="ENSP00000491909.2"/>
    <property type="gene ID" value="ENSG00000113327.17"/>
</dbReference>
<dbReference type="GeneID" id="2566"/>
<dbReference type="KEGG" id="hsa:2566"/>
<dbReference type="MANE-Select" id="ENST00000639213.2">
    <property type="protein sequence ID" value="ENSP00000491909.2"/>
    <property type="RefSeq nucleotide sequence ID" value="NM_198904.4"/>
    <property type="RefSeq protein sequence ID" value="NP_944494.1"/>
</dbReference>
<dbReference type="UCSC" id="uc003lyy.5">
    <molecule id="P18507-2"/>
    <property type="organism name" value="human"/>
</dbReference>
<dbReference type="AGR" id="HGNC:4087"/>
<dbReference type="CTD" id="2566"/>
<dbReference type="DisGeNET" id="2566"/>
<dbReference type="GeneCards" id="GABRG2"/>
<dbReference type="HGNC" id="HGNC:4087">
    <property type="gene designation" value="GABRG2"/>
</dbReference>
<dbReference type="HPA" id="ENSG00000113327">
    <property type="expression patterns" value="Group enriched (brain, retina)"/>
</dbReference>
<dbReference type="MalaCards" id="GABRG2"/>
<dbReference type="MIM" id="137164">
    <property type="type" value="gene"/>
</dbReference>
<dbReference type="MIM" id="607681">
    <property type="type" value="phenotype"/>
</dbReference>
<dbReference type="MIM" id="618396">
    <property type="type" value="phenotype"/>
</dbReference>
<dbReference type="neXtProt" id="NX_P18507"/>
<dbReference type="OpenTargets" id="ENSG00000113327"/>
<dbReference type="Orphanet" id="64280">
    <property type="disease" value="Childhood absence epilepsy"/>
</dbReference>
<dbReference type="Orphanet" id="33069">
    <property type="disease" value="Dravet syndrome"/>
</dbReference>
<dbReference type="Orphanet" id="36387">
    <property type="disease" value="Genetic epilepsy with febrile seizure plus"/>
</dbReference>
<dbReference type="Orphanet" id="442835">
    <property type="disease" value="Non-specific early-onset epileptic encephalopathy"/>
</dbReference>
<dbReference type="Orphanet" id="1945">
    <property type="disease" value="Self-limited epilepsy with centrotemporal spikes"/>
</dbReference>
<dbReference type="PharmGKB" id="PA28501"/>
<dbReference type="VEuPathDB" id="HostDB:ENSG00000113327"/>
<dbReference type="eggNOG" id="KOG3642">
    <property type="taxonomic scope" value="Eukaryota"/>
</dbReference>
<dbReference type="GeneTree" id="ENSGT00940000156685"/>
<dbReference type="HOGENOM" id="CLU_010920_2_0_1"/>
<dbReference type="InParanoid" id="P18507"/>
<dbReference type="OMA" id="AHYSLCF"/>
<dbReference type="OrthoDB" id="203862at2759"/>
<dbReference type="PAN-GO" id="P18507">
    <property type="GO annotations" value="18 GO annotations based on evolutionary models"/>
</dbReference>
<dbReference type="PhylomeDB" id="P18507"/>
<dbReference type="TreeFam" id="TF315453"/>
<dbReference type="PathwayCommons" id="P18507"/>
<dbReference type="Reactome" id="R-HSA-1236394">
    <property type="pathway name" value="Signaling by ERBB4"/>
</dbReference>
<dbReference type="Reactome" id="R-HSA-977443">
    <property type="pathway name" value="GABA receptor activation"/>
</dbReference>
<dbReference type="SignaLink" id="P18507"/>
<dbReference type="SIGNOR" id="P18507"/>
<dbReference type="BioGRID-ORCS" id="2566">
    <property type="hits" value="14 hits in 1160 CRISPR screens"/>
</dbReference>
<dbReference type="ChiTaRS" id="GABRG2">
    <property type="organism name" value="human"/>
</dbReference>
<dbReference type="GeneWiki" id="GABRG2"/>
<dbReference type="GenomeRNAi" id="2566"/>
<dbReference type="Pharos" id="P18507">
    <property type="development level" value="Tclin"/>
</dbReference>
<dbReference type="PRO" id="PR:P18507"/>
<dbReference type="Proteomes" id="UP000005640">
    <property type="component" value="Chromosome 5"/>
</dbReference>
<dbReference type="RNAct" id="P18507">
    <property type="molecule type" value="protein"/>
</dbReference>
<dbReference type="Bgee" id="ENSG00000113327">
    <property type="expression patterns" value="Expressed in middle temporal gyrus and 138 other cell types or tissues"/>
</dbReference>
<dbReference type="ExpressionAtlas" id="P18507">
    <property type="expression patterns" value="baseline and differential"/>
</dbReference>
<dbReference type="GO" id="GO:0030424">
    <property type="term" value="C:axon"/>
    <property type="evidence" value="ECO:0007669"/>
    <property type="project" value="Ensembl"/>
</dbReference>
<dbReference type="GO" id="GO:0034707">
    <property type="term" value="C:chloride channel complex"/>
    <property type="evidence" value="ECO:0007669"/>
    <property type="project" value="UniProtKB-KW"/>
</dbReference>
<dbReference type="GO" id="GO:0030659">
    <property type="term" value="C:cytoplasmic vesicle membrane"/>
    <property type="evidence" value="ECO:0007669"/>
    <property type="project" value="UniProtKB-SubCell"/>
</dbReference>
<dbReference type="GO" id="GO:0032590">
    <property type="term" value="C:dendrite membrane"/>
    <property type="evidence" value="ECO:0000250"/>
    <property type="project" value="BHF-UCL"/>
</dbReference>
<dbReference type="GO" id="GO:0043197">
    <property type="term" value="C:dendritic spine"/>
    <property type="evidence" value="ECO:0000314"/>
    <property type="project" value="UniProt"/>
</dbReference>
<dbReference type="GO" id="GO:1902711">
    <property type="term" value="C:GABA-A receptor complex"/>
    <property type="evidence" value="ECO:0000353"/>
    <property type="project" value="ComplexPortal"/>
</dbReference>
<dbReference type="GO" id="GO:0098982">
    <property type="term" value="C:GABA-ergic synapse"/>
    <property type="evidence" value="ECO:0007669"/>
    <property type="project" value="Ensembl"/>
</dbReference>
<dbReference type="GO" id="GO:0005886">
    <property type="term" value="C:plasma membrane"/>
    <property type="evidence" value="ECO:0000250"/>
    <property type="project" value="UniProtKB"/>
</dbReference>
<dbReference type="GO" id="GO:0098794">
    <property type="term" value="C:postsynapse"/>
    <property type="evidence" value="ECO:0000318"/>
    <property type="project" value="GO_Central"/>
</dbReference>
<dbReference type="GO" id="GO:0045211">
    <property type="term" value="C:postsynaptic membrane"/>
    <property type="evidence" value="ECO:0000314"/>
    <property type="project" value="UniProt"/>
</dbReference>
<dbReference type="GO" id="GO:0099634">
    <property type="term" value="C:postsynaptic specialization membrane"/>
    <property type="evidence" value="ECO:0000250"/>
    <property type="project" value="UniProtKB"/>
</dbReference>
<dbReference type="GO" id="GO:0008503">
    <property type="term" value="F:benzodiazepine receptor activity"/>
    <property type="evidence" value="ECO:0000304"/>
    <property type="project" value="ProtInc"/>
</dbReference>
<dbReference type="GO" id="GO:0005254">
    <property type="term" value="F:chloride channel activity"/>
    <property type="evidence" value="ECO:0000250"/>
    <property type="project" value="UniProtKB"/>
</dbReference>
<dbReference type="GO" id="GO:0004890">
    <property type="term" value="F:GABA-A receptor activity"/>
    <property type="evidence" value="ECO:0000314"/>
    <property type="project" value="UniProt"/>
</dbReference>
<dbReference type="GO" id="GO:0022851">
    <property type="term" value="F:GABA-gated chloride ion channel activity"/>
    <property type="evidence" value="ECO:0000314"/>
    <property type="project" value="UniProtKB"/>
</dbReference>
<dbReference type="GO" id="GO:1904315">
    <property type="term" value="F:transmitter-gated monoatomic ion channel activity involved in regulation of postsynaptic membrane potential"/>
    <property type="evidence" value="ECO:0007669"/>
    <property type="project" value="Ensembl"/>
</dbReference>
<dbReference type="GO" id="GO:0030534">
    <property type="term" value="P:adult behavior"/>
    <property type="evidence" value="ECO:0007669"/>
    <property type="project" value="Ensembl"/>
</dbReference>
<dbReference type="GO" id="GO:0071420">
    <property type="term" value="P:cellular response to histamine"/>
    <property type="evidence" value="ECO:0000250"/>
    <property type="project" value="UniProtKB"/>
</dbReference>
<dbReference type="GO" id="GO:1902476">
    <property type="term" value="P:chloride transmembrane transport"/>
    <property type="evidence" value="ECO:0000314"/>
    <property type="project" value="ComplexPortal"/>
</dbReference>
<dbReference type="GO" id="GO:0007214">
    <property type="term" value="P:gamma-aminobutyric acid signaling pathway"/>
    <property type="evidence" value="ECO:0000314"/>
    <property type="project" value="ComplexPortal"/>
</dbReference>
<dbReference type="GO" id="GO:1904862">
    <property type="term" value="P:inhibitory synapse assembly"/>
    <property type="evidence" value="ECO:0000314"/>
    <property type="project" value="UniProtKB"/>
</dbReference>
<dbReference type="GO" id="GO:0009791">
    <property type="term" value="P:post-embryonic development"/>
    <property type="evidence" value="ECO:0007669"/>
    <property type="project" value="Ensembl"/>
</dbReference>
<dbReference type="GO" id="GO:0051932">
    <property type="term" value="P:synaptic transmission, GABAergic"/>
    <property type="evidence" value="ECO:0000314"/>
    <property type="project" value="UniProt"/>
</dbReference>
<dbReference type="CDD" id="cd19000">
    <property type="entry name" value="LGIC_ECD_GABAAR_G"/>
    <property type="match status" value="1"/>
</dbReference>
<dbReference type="CDD" id="cd19054">
    <property type="entry name" value="LGIC_TM_GABAAR_gamma"/>
    <property type="match status" value="1"/>
</dbReference>
<dbReference type="FunFam" id="2.70.170.10:FF:000003">
    <property type="entry name" value="Putative gamma-aminobutyric acid receptor subunit gamma-2"/>
    <property type="match status" value="1"/>
</dbReference>
<dbReference type="Gene3D" id="2.70.170.10">
    <property type="entry name" value="Neurotransmitter-gated ion-channel ligand-binding domain"/>
    <property type="match status" value="1"/>
</dbReference>
<dbReference type="Gene3D" id="1.20.58.390">
    <property type="entry name" value="Neurotransmitter-gated ion-channel transmembrane domain"/>
    <property type="match status" value="1"/>
</dbReference>
<dbReference type="InterPro" id="IPR006028">
    <property type="entry name" value="GABAA/Glycine_rcpt"/>
</dbReference>
<dbReference type="InterPro" id="IPR005439">
    <property type="entry name" value="GABBAg2_rcpt"/>
</dbReference>
<dbReference type="InterPro" id="IPR005437">
    <property type="entry name" value="GABRG-1/4"/>
</dbReference>
<dbReference type="InterPro" id="IPR006202">
    <property type="entry name" value="Neur_chan_lig-bd"/>
</dbReference>
<dbReference type="InterPro" id="IPR036734">
    <property type="entry name" value="Neur_chan_lig-bd_sf"/>
</dbReference>
<dbReference type="InterPro" id="IPR006201">
    <property type="entry name" value="Neur_channel"/>
</dbReference>
<dbReference type="InterPro" id="IPR036719">
    <property type="entry name" value="Neuro-gated_channel_TM_sf"/>
</dbReference>
<dbReference type="InterPro" id="IPR038050">
    <property type="entry name" value="Neuro_actylchol_rec"/>
</dbReference>
<dbReference type="InterPro" id="IPR006029">
    <property type="entry name" value="Neurotrans-gated_channel_TM"/>
</dbReference>
<dbReference type="InterPro" id="IPR018000">
    <property type="entry name" value="Neurotransmitter_ion_chnl_CS"/>
</dbReference>
<dbReference type="NCBIfam" id="TIGR00860">
    <property type="entry name" value="LIC"/>
    <property type="match status" value="1"/>
</dbReference>
<dbReference type="PANTHER" id="PTHR18945">
    <property type="entry name" value="NEUROTRANSMITTER GATED ION CHANNEL"/>
    <property type="match status" value="1"/>
</dbReference>
<dbReference type="Pfam" id="PF02931">
    <property type="entry name" value="Neur_chan_LBD"/>
    <property type="match status" value="1"/>
</dbReference>
<dbReference type="Pfam" id="PF02932">
    <property type="entry name" value="Neur_chan_memb"/>
    <property type="match status" value="1"/>
</dbReference>
<dbReference type="PRINTS" id="PR00253">
    <property type="entry name" value="GABAARECEPTR"/>
</dbReference>
<dbReference type="PRINTS" id="PR01620">
    <property type="entry name" value="GABAARGAMMA"/>
</dbReference>
<dbReference type="PRINTS" id="PR01622">
    <property type="entry name" value="GABAARGAMMA2"/>
</dbReference>
<dbReference type="PRINTS" id="PR00252">
    <property type="entry name" value="NRIONCHANNEL"/>
</dbReference>
<dbReference type="SUPFAM" id="SSF90112">
    <property type="entry name" value="Neurotransmitter-gated ion-channel transmembrane pore"/>
    <property type="match status" value="1"/>
</dbReference>
<dbReference type="SUPFAM" id="SSF63712">
    <property type="entry name" value="Nicotinic receptor ligand binding domain-like"/>
    <property type="match status" value="1"/>
</dbReference>
<dbReference type="PROSITE" id="PS00236">
    <property type="entry name" value="NEUROTR_ION_CHANNEL"/>
    <property type="match status" value="1"/>
</dbReference>
<feature type="signal peptide" evidence="4">
    <location>
        <begin position="1"/>
        <end position="39"/>
    </location>
</feature>
<feature type="chain" id="PRO_0000000477" description="Gamma-aminobutyric acid receptor subunit gamma-2">
    <location>
        <begin position="40"/>
        <end position="475"/>
    </location>
</feature>
<feature type="topological domain" description="Extracellular" evidence="25">
    <location>
        <begin position="40"/>
        <end position="275"/>
    </location>
</feature>
<feature type="transmembrane region" description="Helical" evidence="20 29">
    <location>
        <begin position="276"/>
        <end position="296"/>
    </location>
</feature>
<feature type="topological domain" description="Cytoplasmic" evidence="25">
    <location>
        <begin position="297"/>
        <end position="302"/>
    </location>
</feature>
<feature type="transmembrane region" description="Helical" evidence="20 29">
    <location>
        <begin position="303"/>
        <end position="322"/>
    </location>
</feature>
<feature type="topological domain" description="Extracellular" evidence="25">
    <location>
        <begin position="323"/>
        <end position="334"/>
    </location>
</feature>
<feature type="transmembrane region" description="Helical" evidence="20 29">
    <location>
        <begin position="335"/>
        <end position="359"/>
    </location>
</feature>
<feature type="topological domain" description="Cytoplasmic" evidence="25">
    <location>
        <begin position="360"/>
        <end position="451"/>
    </location>
</feature>
<feature type="transmembrane region" description="Helical" evidence="20 29">
    <location>
        <begin position="452"/>
        <end position="472"/>
    </location>
</feature>
<feature type="topological domain" description="Extracellular" evidence="25">
    <location>
        <begin position="473"/>
        <end position="475"/>
    </location>
</feature>
<feature type="region of interest" description="Interaction with GABARAP" evidence="4">
    <location>
        <begin position="433"/>
        <end position="450"/>
    </location>
</feature>
<feature type="glycosylation site" description="N-linked (GlcNAc...) asparagine" evidence="4">
    <location>
        <position position="52"/>
    </location>
</feature>
<feature type="glycosylation site" description="N-linked (GlcNAc...) asparagine" evidence="4">
    <location>
        <position position="129"/>
    </location>
</feature>
<feature type="glycosylation site" description="N-linked (GlcNAc...) asparagine" evidence="19 20 27 29">
    <location>
        <position position="247"/>
    </location>
</feature>
<feature type="disulfide bond" evidence="20 29">
    <location>
        <begin position="190"/>
        <end position="204"/>
    </location>
</feature>
<feature type="splice variant" id="VSP_061922" description="In isoform 3." evidence="25">
    <original>Y</original>
    <variation>WSRSIAQAGMCSGVISAHYSLRFWGSTDPPTLASRVAGISD</variation>
    <location>
        <position position="211"/>
    </location>
</feature>
<feature type="splice variant" id="VSP_061923" description="In isoform 2." evidence="25">
    <location>
        <begin position="377"/>
        <end position="384"/>
    </location>
</feature>
<feature type="sequence variant" id="VAR_065226" description="Found in a patient with generalized tonic-clonic seizures; dbSNP:rs112894280." evidence="11">
    <original>N</original>
    <variation>S</variation>
    <location>
        <position position="79"/>
    </location>
</feature>
<feature type="sequence variant" id="VAR_014265" description="In ECA2 and FEB8; abolishes in vitro sensitivity to diazepam; dbSNP:rs121909673." evidence="6">
    <original>R</original>
    <variation>Q</variation>
    <location>
        <position position="82"/>
    </location>
</feature>
<feature type="sequence variant" id="VAR_071813" description="Found in a patient with idiopathic generalized epilepsy; uncertain significance; the currents elicited by mutant receptors are indistinguishable from wild-type; no difference in sensitivity of the mutant receptors to the allosteric regulators zinc and benzodiazepine diazepam compared to wild-type; dbSNP:rs587777365." evidence="12">
    <original>P</original>
    <variation>S</variation>
    <location>
        <position position="83"/>
    </location>
</feature>
<feature type="sequence variant" id="VAR_082266" description="In DEE74; does not affect protein abundance; decreases cell surface expression; decreases current amplitude in response to GABA; does not affect zinc sensitivity; accelerates activation and prolonges deactivation; dbSNP:rs796052505." evidence="17">
    <original>A</original>
    <variation>T</variation>
    <location>
        <position position="106"/>
    </location>
</feature>
<feature type="sequence variant" id="VAR_082267" description="In DEE74; increases protein abundance; retained in the endoplasmic reticulum; decreases cell surface expression; decreases current amplitude in response to GABA; increases zinc sensitivity; accelerates activation and prolonges deactivation." evidence="17">
    <original>I</original>
    <variation>T</variation>
    <location>
        <position position="107"/>
    </location>
</feature>
<feature type="sequence variant" id="VAR_038602" description="In FEB8; dbSNP:rs267606837." evidence="10">
    <original>R</original>
    <variation>G</variation>
    <location>
        <position position="177"/>
    </location>
</feature>
<feature type="sequence variant" id="VAR_078226" description="Found in a patient with generalized epilepsy with myoclonic atonic seizures, cognitive impairment and behavioral disorder; likely pathogenic." evidence="18">
    <original>Y</original>
    <variation>C</variation>
    <location>
        <position position="274"/>
    </location>
</feature>
<feature type="sequence variant" id="VAR_082268" description="In DEE74; increases protein abundance; retained in the endoplasmic reticulum decreases; cell surface expression; decreases current amplitude in response to GABA; increases zinc sensitivity; accelerates activation and prolonges deactivation; dbSNP:rs796052508." evidence="17">
    <original>P</original>
    <variation>S</variation>
    <location>
        <position position="282"/>
    </location>
</feature>
<feature type="sequence variant" id="VAR_078620" description="In GEFSP3 and DEE74; does not affect protein abundance; decreases cell surface expression; decreases current amplitude in response to GABA; increases zinc sensitivity; accelerates deactivation; dbSNP:rs397514737." evidence="13 17">
    <original>R</original>
    <variation>Q</variation>
    <location>
        <position position="323"/>
    </location>
</feature>
<feature type="sequence variant" id="VAR_082269" description="In DEE74; does not affect protein abundance; decreases cell surface expression; decreases current amplitude in response to GABA; increases zinc sensitivity; accelerates deactivation; dbSNP:rs796052510." evidence="17">
    <original>R</original>
    <variation>W</variation>
    <location>
        <position position="323"/>
    </location>
</feature>
<feature type="sequence variant" id="VAR_014266" description="In GEFSP3; dbSNP:rs121909672." evidence="5">
    <original>K</original>
    <variation>M</variation>
    <location>
        <position position="328"/>
    </location>
</feature>
<feature type="sequence variant" id="VAR_082270" description="In DEE74; does not affect protein abundance; decreases cell surface expression; decreases current amplitude in response to GABA; does not affect zinc sensitivity; accelerates activation and prolonges deactivation; dbSNP:rs796052511 and dbSNP:rs1554100923." evidence="17">
    <original>F</original>
    <variation>L</variation>
    <location>
        <position position="343"/>
    </location>
</feature>
<feature type="sequence variant" id="VAR_065163" description="In dbSNP:rs17855003." evidence="8">
    <original>H</original>
    <variation>R</variation>
    <location>
        <position position="357"/>
    </location>
</feature>
<feature type="sequence conflict" description="In Ref. 1; CAA33437." evidence="25" ref="1">
    <original>T</original>
    <variation>M</variation>
    <location>
        <position position="120"/>
    </location>
</feature>
<feature type="sequence conflict" description="In Ref. 1; CAA33437." evidence="25" ref="1">
    <original>T</original>
    <variation>S</variation>
    <location>
        <position position="181"/>
    </location>
</feature>
<feature type="sequence conflict" description="In Ref. 5; no nucleotide entry." evidence="25" ref="5">
    <location>
        <begin position="392"/>
        <end position="393"/>
    </location>
</feature>
<feature type="sequence conflict" description="In Ref. 5; no nucleotide entry." evidence="25" ref="5">
    <original>E</original>
    <variation>D</variation>
    <location>
        <position position="407"/>
    </location>
</feature>
<feature type="sequence conflict" description="In Ref. 5; no nucleotide entry." evidence="25" ref="5">
    <original>IA</original>
    <variation>RI</variation>
    <location>
        <begin position="446"/>
        <end position="447"/>
    </location>
</feature>
<feature type="helix" evidence="31">
    <location>
        <begin position="65"/>
        <end position="73"/>
    </location>
</feature>
<feature type="turn" evidence="31">
    <location>
        <begin position="74"/>
        <end position="76"/>
    </location>
</feature>
<feature type="turn" evidence="31">
    <location>
        <begin position="83"/>
        <end position="87"/>
    </location>
</feature>
<feature type="strand" evidence="31">
    <location>
        <begin position="90"/>
        <end position="105"/>
    </location>
</feature>
<feature type="turn" evidence="31">
    <location>
        <begin position="106"/>
        <end position="109"/>
    </location>
</feature>
<feature type="strand" evidence="31">
    <location>
        <begin position="110"/>
        <end position="122"/>
    </location>
</feature>
<feature type="helix" evidence="31">
    <location>
        <begin position="124"/>
        <end position="126"/>
    </location>
</feature>
<feature type="strand" evidence="30">
    <location>
        <begin position="130"/>
        <end position="132"/>
    </location>
</feature>
<feature type="strand" evidence="31">
    <location>
        <begin position="134"/>
        <end position="137"/>
    </location>
</feature>
<feature type="helix" evidence="31">
    <location>
        <begin position="139"/>
        <end position="144"/>
    </location>
</feature>
<feature type="strand" evidence="31">
    <location>
        <begin position="150"/>
        <end position="152"/>
    </location>
</feature>
<feature type="strand" evidence="31">
    <location>
        <begin position="155"/>
        <end position="160"/>
    </location>
</feature>
<feature type="strand" evidence="31">
    <location>
        <begin position="163"/>
        <end position="165"/>
    </location>
</feature>
<feature type="strand" evidence="31">
    <location>
        <begin position="168"/>
        <end position="173"/>
    </location>
</feature>
<feature type="strand" evidence="31">
    <location>
        <begin position="176"/>
        <end position="189"/>
    </location>
</feature>
<feature type="turn" evidence="31">
    <location>
        <begin position="195"/>
        <end position="198"/>
    </location>
</feature>
<feature type="strand" evidence="31">
    <location>
        <begin position="201"/>
        <end position="212"/>
    </location>
</feature>
<feature type="turn" evidence="31">
    <location>
        <begin position="215"/>
        <end position="217"/>
    </location>
</feature>
<feature type="strand" evidence="31">
    <location>
        <begin position="218"/>
        <end position="229"/>
    </location>
</feature>
<feature type="strand" evidence="31">
    <location>
        <begin position="232"/>
        <end position="235"/>
    </location>
</feature>
<feature type="strand" evidence="31">
    <location>
        <begin position="238"/>
        <end position="254"/>
    </location>
</feature>
<feature type="strand" evidence="31">
    <location>
        <begin position="257"/>
        <end position="270"/>
    </location>
</feature>
<feature type="helix" evidence="31">
    <location>
        <begin position="274"/>
        <end position="291"/>
    </location>
</feature>
<feature type="helix" evidence="31">
    <location>
        <begin position="292"/>
        <end position="295"/>
    </location>
</feature>
<feature type="helix" evidence="31">
    <location>
        <begin position="301"/>
        <end position="323"/>
    </location>
</feature>
<feature type="strand" evidence="32">
    <location>
        <begin position="324"/>
        <end position="326"/>
    </location>
</feature>
<feature type="helix" evidence="31">
    <location>
        <begin position="334"/>
        <end position="359"/>
    </location>
</feature>
<feature type="helix" evidence="31">
    <location>
        <begin position="448"/>
        <end position="473"/>
    </location>
</feature>
<evidence type="ECO:0000250" key="1">
    <source>
        <dbReference type="UniProtKB" id="P08219"/>
    </source>
</evidence>
<evidence type="ECO:0000250" key="2">
    <source>
        <dbReference type="UniProtKB" id="P18508"/>
    </source>
</evidence>
<evidence type="ECO:0000250" key="3">
    <source>
        <dbReference type="UniProtKB" id="P22723"/>
    </source>
</evidence>
<evidence type="ECO:0000255" key="4"/>
<evidence type="ECO:0000269" key="5">
    <source>
    </source>
</evidence>
<evidence type="ECO:0000269" key="6">
    <source>
    </source>
</evidence>
<evidence type="ECO:0000269" key="7">
    <source>
    </source>
</evidence>
<evidence type="ECO:0000269" key="8">
    <source>
    </source>
</evidence>
<evidence type="ECO:0000269" key="9">
    <source>
    </source>
</evidence>
<evidence type="ECO:0000269" key="10">
    <source>
    </source>
</evidence>
<evidence type="ECO:0000269" key="11">
    <source>
    </source>
</evidence>
<evidence type="ECO:0000269" key="12">
    <source>
    </source>
</evidence>
<evidence type="ECO:0000269" key="13">
    <source>
    </source>
</evidence>
<evidence type="ECO:0000269" key="14">
    <source>
    </source>
</evidence>
<evidence type="ECO:0000269" key="15">
    <source>
    </source>
</evidence>
<evidence type="ECO:0000269" key="16">
    <source>
    </source>
</evidence>
<evidence type="ECO:0000269" key="17">
    <source>
    </source>
</evidence>
<evidence type="ECO:0000269" key="18">
    <source>
    </source>
</evidence>
<evidence type="ECO:0000269" key="19">
    <source>
    </source>
</evidence>
<evidence type="ECO:0000269" key="20">
    <source>
    </source>
</evidence>
<evidence type="ECO:0000269" key="21">
    <source>
    </source>
</evidence>
<evidence type="ECO:0000303" key="22">
    <source>
    </source>
</evidence>
<evidence type="ECO:0000303" key="23">
    <source>
    </source>
</evidence>
<evidence type="ECO:0000303" key="24">
    <source>
    </source>
</evidence>
<evidence type="ECO:0000305" key="25"/>
<evidence type="ECO:0000312" key="26">
    <source>
        <dbReference type="HGNC" id="HGNC:4087"/>
    </source>
</evidence>
<evidence type="ECO:0007744" key="27">
    <source>
        <dbReference type="PDB" id="6D6T"/>
    </source>
</evidence>
<evidence type="ECO:0007744" key="28">
    <source>
        <dbReference type="PDB" id="6D6U"/>
    </source>
</evidence>
<evidence type="ECO:0007744" key="29">
    <source>
        <dbReference type="PDB" id="6I53"/>
    </source>
</evidence>
<evidence type="ECO:0007829" key="30">
    <source>
        <dbReference type="PDB" id="6I53"/>
    </source>
</evidence>
<evidence type="ECO:0007829" key="31">
    <source>
        <dbReference type="PDB" id="6X3T"/>
    </source>
</evidence>
<evidence type="ECO:0007829" key="32">
    <source>
        <dbReference type="PDB" id="7QNE"/>
    </source>
</evidence>
<comment type="function">
    <text evidence="1 2 3 7 9 14 15 16 17 19 20">Gamma subunit of the heteropentameric ligand-gated chloride channel gated by gamma-aminobutyric acid (GABA), a major inhibitory neurotransmitter in the brain (PubMed:14993607, PubMed:16412217, PubMed:23909897, PubMed:2538761, PubMed:25489750, PubMed:27864268, PubMed:29950725, PubMed:30602789). GABA-gated chloride channels, also named GABA(A) receptors (GABAAR), consist of five subunits arranged around a central pore and contain GABA active binding site(s) located at the alpha and beta subunit interface(s) (PubMed:29950725, PubMed:30602789). When activated by GABA, GABAARs selectively allow the flow of chloride anions across the cell membrane down their electrochemical gradient (PubMed:14993607, PubMed:16412217, PubMed:2538761, PubMed:27864268, PubMed:29950725, PubMed:30602789). Gamma-2/GABRG2-containing GABAARs are found at both synaptic and extrasynaptic sites (By similarity). Chloride influx into the postsynaptic neuron following GABAAR opening decreases the neuron ability to generate a new action potential, thereby reducing nerve transmission (By similarity). GABAARs containing alpha-1 and beta-2 or -3 subunits exhibit synaptogenic activity; the gamma-2 subunit being necessary but not sufficient to induce rapid synaptic contacts formation (PubMed:23909897, PubMed:25489750). Extrasynaptic gamma-2-containing receptors contribute to the tonic GABAergic inhibition (By similarity). GABAARs function also as histamine receptor where histamine binds at the interface of two neighboring beta subunits and potentiates GABA response in a gamma-2 subunit-controlled manner (By similarity).</text>
</comment>
<comment type="catalytic activity">
    <reaction evidence="7 9 15 17 19 20">
        <text>chloride(in) = chloride(out)</text>
        <dbReference type="Rhea" id="RHEA:29823"/>
        <dbReference type="ChEBI" id="CHEBI:17996"/>
    </reaction>
</comment>
<comment type="activity regulation">
    <text evidence="3 9 15 17 19">Allosterically activated by benzodiazepines (PubMed:16412217, PubMed:2538761, PubMed:29950725). Activated by pentobarbital (PubMed:16412217). Potentiated by etomidate, propofol, pregnanolone (PubMed:16412217). Inhibited by the antagonist bicuculline (PubMed:29950725). Inhibited by zinc ions (PubMed:27864268). Potentiated by histamine (By similarity).</text>
</comment>
<comment type="subunit">
    <text evidence="2 3 7 15 19 20 21">Heteropentamer, formed by a combination of alpha (GABRA1-6), beta (GABRB1-3), gamma (GABRG1-3), delta (GABRD), epsilon (GABRE), rho (GABRR1-3), pi (GABRP) and theta (GABRQ) chains, each subunit exhibiting distinct physiological and pharmacological properties (PubMed:14993607, PubMed:2538761, PubMed:29950725, PubMed:30602789). Interacts with GABARAP (PubMed:9892355). Interacts with KIF21B (By similarity). Identified in a complex of 720 kDa composed of LHFPL4, NLGN2, GABRA1, GABRB2, GABRG2 and GABRB3 (By similarity). Interacts with LHFPL4 (By similarity). Interacts with SHISA7; interaction leads to the regulation of GABA(A) receptor trafficking, channel deactivation kinetics and pharmacology (By similarity).</text>
</comment>
<comment type="interaction">
    <interactant intactId="EBI-9008430">
        <id>P18507</id>
    </interactant>
    <interactant intactId="EBI-726123">
        <id>P51513</id>
        <label>NOVA1</label>
    </interactant>
    <organismsDiffer>false</organismsDiffer>
    <experiments>2</experiments>
</comment>
<comment type="interaction">
    <interactant intactId="EBI-15096952">
        <id>P18507-2</id>
    </interactant>
    <interactant intactId="EBI-712001">
        <id>O95166</id>
        <label>GABARAP</label>
    </interactant>
    <organismsDiffer>false</organismsDiffer>
    <experiments>3</experiments>
</comment>
<comment type="subcellular location">
    <subcellularLocation>
        <location evidence="15">Postsynaptic cell membrane</location>
        <topology evidence="20 29">Multi-pass membrane protein</topology>
    </subcellularLocation>
    <subcellularLocation>
        <location evidence="15 17">Cell membrane</location>
        <topology evidence="20 29">Multi-pass membrane protein</topology>
    </subcellularLocation>
    <subcellularLocation>
        <location evidence="3">Cell projection</location>
        <location evidence="3">Dendrite</location>
    </subcellularLocation>
    <subcellularLocation>
        <location evidence="2">Cytoplasmic vesicle membrane</location>
    </subcellularLocation>
</comment>
<comment type="alternative products">
    <event type="alternative splicing"/>
    <isoform>
        <id>P18507-2</id>
        <name>1</name>
        <sequence type="displayed"/>
    </isoform>
    <isoform>
        <id>P18507-1</id>
        <name>2</name>
        <sequence type="described" ref="VSP_061923"/>
    </isoform>
    <isoform>
        <id>P18507-3</id>
        <name>3</name>
        <sequence type="described" ref="VSP_061922"/>
    </isoform>
</comment>
<comment type="domain">
    <text evidence="3">The extracellular domain contributes to synaptic contact formation.</text>
</comment>
<comment type="domain">
    <text evidence="19">GABAARs subunits share a common topological structure: a peptide sequence made up of a long extracellular N-terminal, four transmembrane domains, intracellular or cytoplasmic domain located between the third and the fourth transmembrane domains.</text>
</comment>
<comment type="PTM">
    <text evidence="3">Palmitoylated by ZDHHC3/GODZ; required for the accumulation of GABA(A) receptors at the postsynaptic membrane of inhibitory GABAergic synapses.</text>
</comment>
<comment type="disease" evidence="17">
    <disease id="DI-05528">
        <name>Developmental and epileptic encephalopathy 74</name>
        <acronym>DEE74</acronym>
        <description>A form of epileptic encephalopathy, a heterogeneous group of severe early-onset epilepsies characterized by refractory seizures, neurodevelopmental impairment, and poor prognosis. Development is normal prior to seizure onset, after which cognitive and motor delays become apparent. DEE74 is an autosomal dominant form with onset in the first year of life.</description>
        <dbReference type="MIM" id="618396"/>
    </disease>
    <text>The gene represented in this entry is involved in disease pathogenesis.</text>
</comment>
<comment type="disease" evidence="6">
    <disease id="DI-00297">
        <name>Epilepsy, childhood absence 2</name>
        <acronym>ECA2</acronym>
        <description>A subtype of idiopathic generalized epilepsy characterized by an onset at age 6-7 years, frequent absence seizures (several per day) and bilateral, synchronous, symmetric 3-Hz spike waves on EEG. Tonic-clonic seizures often develop in adolescence. Some individuals manifest febrile seizures. Absence seizures may either remit or persist into adulthood.</description>
        <dbReference type="MIM" id="607681"/>
    </disease>
    <text>Disease susceptibility is associated with variants affecting the gene represented in this entry.</text>
</comment>
<comment type="disease" evidence="10">
    <disease id="DI-00490">
        <name>Febrile seizures, familial, 8</name>
        <acronym>FEB8</acronym>
        <description>Seizures associated with febrile episodes in childhood without any evidence of intracranial infection or defined pathologic or traumatic cause. It is a common condition, affecting 2-5% of children aged 3 months to 5 years. The majority are simple febrile seizures (generally defined as generalized onset, single seizures with a duration of less than 30 minutes). Complex febrile seizures are characterized by focal onset, duration greater than 30 minutes, and/or more than one seizure in a 24 hour period. The likelihood of developing epilepsy following simple febrile seizures is low. Complex febrile seizures are associated with a moderately increased incidence of epilepsy.</description>
        <dbReference type="MIM" id="607681"/>
    </disease>
    <text>The disease is caused by variants affecting the gene represented in this entry.</text>
</comment>
<comment type="disease" evidence="5 13">
    <disease id="DI-00507">
        <name>Generalized epilepsy with febrile seizures plus 3</name>
        <acronym>GEFSP3</acronym>
        <description>A rare autosomal dominant, familial condition with incomplete penetrance and large intrafamilial variability. Patients display febrile seizures persisting sometimes beyond the age of 6 years and/or a variety of afebrile seizure types. This disease combines febrile seizures, generalized seizures often precipitated by fever at age 6 years or more, and partial seizures, with a variable degree of severity.</description>
        <dbReference type="MIM" id="607681"/>
    </disease>
    <text>The disease is caused by variants affecting the gene represented in this entry.</text>
</comment>
<comment type="similarity">
    <text evidence="25">Belongs to the ligand-gated ion channel (TC 1.A.9) family. Gamma-aminobutyric acid receptor (TC 1.A.9.5) subfamily. GABRG2 sub-subfamily.</text>
</comment>
<comment type="online information" name="Protein Spotlight">
    <link uri="https://www.proteinspotlight.org/back_issues/056"/>
    <text>Forbidden fruit - Issue 56 of March 2005</text>
</comment>